<reference key="1">
    <citation type="journal article" date="1992" name="J. Gen. Microbiol.">
        <title>The homologies of gas vesicle proteins.</title>
        <authorList>
            <person name="Griffiths A.E."/>
            <person name="Walsby A.E."/>
            <person name="Hayes P.K."/>
        </authorList>
    </citation>
    <scope>PROTEIN SEQUENCE</scope>
    <scope>SUBCELLULAR LOCATION</scope>
</reference>
<reference key="2">
    <citation type="journal article" date="1984" name="J. Gen. Microbiol.">
        <title>Homology of gas vesicle proteins in cyanobacteria and halobacteria.</title>
        <authorList>
            <person name="Walker J.E."/>
            <person name="Hayes P.K."/>
            <person name="Walsby A.E."/>
        </authorList>
    </citation>
    <scope>PROTEIN SEQUENCE OF 1-46</scope>
    <scope>FUNCTION</scope>
    <scope>SUBCELLULAR LOCATION</scope>
    <source>
        <strain>PCC 8305</strain>
    </source>
</reference>
<comment type="function">
    <text evidence="1 2">Gas vesicles are hollow, gas filled proteinaceous nanostructures found in some microorganisms. During planktonic growth they allow positioning of the organism at a favorable depth for light or nutrient acquisition. GvpA forms the protein shell.</text>
</comment>
<comment type="subunit">
    <text evidence="1">The gas vesicle shell is 2 nm thick and consists of a single layer of this protein. It forms helical ribs nearly perpendicular to the long axis of the vesicle.</text>
</comment>
<comment type="subcellular location">
    <subcellularLocation>
        <location evidence="1 2 3">Gas vesicle shell</location>
    </subcellularLocation>
</comment>
<comment type="similarity">
    <text evidence="1">Belongs to the gas vesicle GvpA family.</text>
</comment>
<proteinExistence type="evidence at protein level"/>
<evidence type="ECO:0000255" key="1">
    <source>
        <dbReference type="HAMAP-Rule" id="MF_00576"/>
    </source>
</evidence>
<evidence type="ECO:0000269" key="2">
    <source>
    </source>
</evidence>
<evidence type="ECO:0000269" key="3">
    <source ref="2"/>
</evidence>
<evidence type="ECO:0000303" key="4">
    <source>
    </source>
</evidence>
<evidence type="ECO:0000303" key="5">
    <source ref="2"/>
</evidence>
<protein>
    <recommendedName>
        <fullName evidence="1">Gas vesicle protein A</fullName>
        <shortName evidence="1 4">GvpA</shortName>
    </recommendedName>
    <alternativeName>
        <fullName evidence="4">Gas vesicle structural protein</fullName>
        <shortName evidence="5">GVP</shortName>
    </alternativeName>
</protein>
<name>GVPA_DACSA</name>
<feature type="chain" id="PRO_0000199983" description="Gas vesicle protein A">
    <location>
        <begin position="1"/>
        <end position="47" status="greater than"/>
    </location>
</feature>
<feature type="non-terminal residue">
    <location>
        <position position="47"/>
    </location>
</feature>
<organism>
    <name type="scientific">Dactylococcopsis salina</name>
    <name type="common">Myxobaktron salinum</name>
    <dbReference type="NCBI Taxonomy" id="292566"/>
    <lineage>
        <taxon>Bacteria</taxon>
        <taxon>Bacillati</taxon>
        <taxon>Cyanobacteriota</taxon>
        <taxon>Cyanophyceae</taxon>
        <taxon>Synechococcales</taxon>
        <taxon>Synechococcaceae</taxon>
        <taxon>Dactylococcopsis</taxon>
    </lineage>
</organism>
<dbReference type="SMR" id="Q9R5H8"/>
<dbReference type="GO" id="GO:0031411">
    <property type="term" value="C:gas vesicle"/>
    <property type="evidence" value="ECO:0007669"/>
    <property type="project" value="UniProtKB-KW"/>
</dbReference>
<dbReference type="GO" id="GO:0012506">
    <property type="term" value="C:vesicle membrane"/>
    <property type="evidence" value="ECO:0007669"/>
    <property type="project" value="InterPro"/>
</dbReference>
<dbReference type="GO" id="GO:0005198">
    <property type="term" value="F:structural molecule activity"/>
    <property type="evidence" value="ECO:0007669"/>
    <property type="project" value="InterPro"/>
</dbReference>
<dbReference type="InterPro" id="IPR000638">
    <property type="entry name" value="Gas-vesicle_GvpA-like"/>
</dbReference>
<dbReference type="InterPro" id="IPR050530">
    <property type="entry name" value="GvpA"/>
</dbReference>
<dbReference type="InterPro" id="IPR018493">
    <property type="entry name" value="GvpA-like_CS"/>
</dbReference>
<dbReference type="PANTHER" id="PTHR35344:SF4">
    <property type="entry name" value="GAS VESICLE PROTEIN A1"/>
    <property type="match status" value="1"/>
</dbReference>
<dbReference type="PANTHER" id="PTHR35344">
    <property type="entry name" value="GAS VESICLE STRUCTURAL PROTEIN 2-RELATED"/>
    <property type="match status" value="1"/>
</dbReference>
<dbReference type="Pfam" id="PF00741">
    <property type="entry name" value="Gas_vesicle"/>
    <property type="match status" value="1"/>
</dbReference>
<dbReference type="PROSITE" id="PS00234">
    <property type="entry name" value="GAS_VESICLE_A_1"/>
    <property type="match status" value="1"/>
</dbReference>
<keyword id="KW-0903">Direct protein sequencing</keyword>
<keyword id="KW-0304">Gas vesicle</keyword>
<accession>Q9R5H8</accession>
<gene>
    <name evidence="1 4" type="primary">gvpA</name>
</gene>
<sequence>AVEKTNSSSSLGEVVDRILDKGVVVDLWVRVSLVGIELLALEARVVI</sequence>